<protein>
    <recommendedName>
        <fullName evidence="9">Aconitate hydratase A</fullName>
        <shortName evidence="9">ACN</shortName>
        <shortName evidence="8">Aconitase</shortName>
        <ecNumber evidence="6 10">4.2.1.3</ecNumber>
    </recommendedName>
</protein>
<sequence length="931" mass="99762">MSANSFDARSTLQVGDESYEIFRLDKVEGSARLPYSLKVLLENLLRTEDGANITADHIRALGGWDSQAQPSQEIQFTPARVIMQDFTGVPCVVDLATMREAVKELGGDPAKINPLAPAELVIDHSVIADKFGTNDAFKQNVELEYGRNKERYQFLRWGQTAFDEFKVVPPGTGIVHQVNIEHLARTVMVRGGQAYPDTLVGTDSHTTMVNGLGVLGWGVGGIEAEAAMLGQPVSMLIPRVVGFKLTGELKPGTTATDLVLTITEMLRGHGVVGKFVEFYGEGVAATSLANRATIGNMSPEFGSTAAIFPIDDETLNYLRLTGRSEQQVALVESYAKEQGLWLDPAAEPDFSEKLELDLSTVVPSIAGPKRPQDRIVLAEAAQQFAKDVLNYVEAPAAQPAASASPVDEASAESFPASDAPAYGSQENGAGAPQHADGTGAAVPSNPVTVTAPDGTSYEIDHGAVTVAAITSCTNTSNPYVMVAAALVAKKAVEKGLTRKPWVKTTLAPGSKVVTDYFEKSGLTPYLDKVGFNLVGYGCTTCIGNSGPLPEEVSKAVNDHDLAVTSVLSGNRNFEGRINPDVKMNYLASPPLVVAYALAGSMKVDITKDALGTDQDGNPVYLKDIWPSEAEVNDVVANAIGEDMFSKSYSDVFAGDAQWQALPIPTGNTFEWDPESTYVRKPPYFEGMEMEPAPVEDIAGARVLAKLGDSVTTDHISPAGAIKADTPAGKYLTEHGVERRDFNSYGSRRGNHEVMIRGTFANIRLRNQIAPGTEGGYTRDFTKDDAPVSFIYDASRNYIEQGIPLVVLAGKEYGSGSSRDWAAKGTALLGVKAVIAESYERIHRSNLIGMGVLPLQFPEGQSAATLGLTGEETFSFSGVTELNNGTTPRTVKVTTDTGVEFDAVVRIDTPGEADYYRNGGIMQYVLRSLIRK</sequence>
<evidence type="ECO:0000250" key="1">
    <source>
        <dbReference type="UniProtKB" id="P36683"/>
    </source>
</evidence>
<evidence type="ECO:0000256" key="2">
    <source>
        <dbReference type="SAM" id="MobiDB-lite"/>
    </source>
</evidence>
<evidence type="ECO:0000269" key="3">
    <source>
    </source>
</evidence>
<evidence type="ECO:0000269" key="4">
    <source>
    </source>
</evidence>
<evidence type="ECO:0000269" key="5">
    <source>
    </source>
</evidence>
<evidence type="ECO:0000269" key="6">
    <source>
    </source>
</evidence>
<evidence type="ECO:0000269" key="7">
    <source>
    </source>
</evidence>
<evidence type="ECO:0000303" key="8">
    <source>
    </source>
</evidence>
<evidence type="ECO:0000305" key="9"/>
<evidence type="ECO:0000305" key="10">
    <source>
    </source>
</evidence>
<evidence type="ECO:0000312" key="11">
    <source>
        <dbReference type="EMBL" id="CAB62405.1"/>
    </source>
</evidence>
<evidence type="ECO:0000312" key="12">
    <source>
        <dbReference type="EMBL" id="EFL35567.1"/>
    </source>
</evidence>
<comment type="function">
    <text evidence="3 6 7">Catalyzes the reversible isomerization of citrate to isocitrate via cis-aconitate in the tricarboxylic acid (TCA) cycle (PubMed:10559181, PubMed:23116164). Aconitase activity is important for the initiation of morphological and physiological differentiation of S.viridochromogenes (PubMed:10559181, PubMed:23116164). In addition, the apo form of AcnA (lacking the [4Fe-4S] cluster) functions as a RNA-binding regulatory protein, which binds to iron responsive elements (IREs) located on the untranslated region of certain mRNAs, including recA and ftsZ (PubMed:23116164). Binding to IRE-like structures probably alters the target mRNA stability and regulates the protein amount (PubMed:23116164). The apo form plays a regulatory role in oxidative stress response (PubMed:23116164, PubMed:24498397).</text>
</comment>
<comment type="catalytic activity">
    <reaction evidence="6 10">
        <text>citrate = D-threo-isocitrate</text>
        <dbReference type="Rhea" id="RHEA:10336"/>
        <dbReference type="ChEBI" id="CHEBI:15562"/>
        <dbReference type="ChEBI" id="CHEBI:16947"/>
        <dbReference type="EC" id="4.2.1.3"/>
    </reaction>
</comment>
<comment type="catalytic activity">
    <reaction evidence="6">
        <text>citrate = cis-aconitate + H2O</text>
        <dbReference type="Rhea" id="RHEA:10228"/>
        <dbReference type="ChEBI" id="CHEBI:15377"/>
        <dbReference type="ChEBI" id="CHEBI:16383"/>
        <dbReference type="ChEBI" id="CHEBI:16947"/>
    </reaction>
</comment>
<comment type="catalytic activity">
    <reaction evidence="6">
        <text>cis-aconitate + H2O = D-threo-isocitrate</text>
        <dbReference type="Rhea" id="RHEA:22144"/>
        <dbReference type="ChEBI" id="CHEBI:15377"/>
        <dbReference type="ChEBI" id="CHEBI:15562"/>
        <dbReference type="ChEBI" id="CHEBI:16383"/>
    </reaction>
</comment>
<comment type="cofactor">
    <cofactor evidence="1">
        <name>[4Fe-4S] cluster</name>
        <dbReference type="ChEBI" id="CHEBI:49883"/>
    </cofactor>
    <text evidence="1">Binds 1 [4Fe-4S] cluster per subunit.</text>
</comment>
<comment type="pathway">
    <text evidence="10">Carbohydrate metabolism; tricarboxylic acid cycle; isocitrate from oxaloacetate: step 2/2.</text>
</comment>
<comment type="induction">
    <text evidence="5">The transcription rate is high during the early growth phase, which is characterized by non-production of the phosphinothricin tripeptide (PTT) (PubMed:12420172). After 24 hours, when PTT production starts, the transcription decreases (PubMed:12420172). Several putative, regulatory protein binding sites are detected in the promoter region of acnA, which suggests complex regulation of this gene (PubMed:12420172).</text>
</comment>
<comment type="disruption phenotype">
    <text evidence="3 4 6">Mutant is unable to develop aerial mycelium and to sporulate, resulting in a bald phenotype (PubMed:10559181). Furthermore, the mutant does not produce the antibiotic phosphinothricin tripeptide (PTT), suggesting a defect in physiological differentiation (PubMed:10559181). It is also sensitive to oxidative and temperature stress (PubMed:23116164). Mutant cannot be complemented by pmi (PubMed:11472937).</text>
</comment>
<comment type="miscellaneous">
    <text evidence="4">AcnA cannot substitute for the function of the phosphinomethylmalate isomerase Pmi, despite the high similarity of the two proteins.</text>
</comment>
<comment type="similarity">
    <text evidence="9">Belongs to the aconitase/IPM isomerase family.</text>
</comment>
<accession>D9X0I3</accession>
<accession>Q9RIL1</accession>
<proteinExistence type="evidence at protein level"/>
<gene>
    <name evidence="8" type="primary">acnA</name>
    <name evidence="12" type="ORF">SSQG_06085</name>
</gene>
<keyword id="KW-0004">4Fe-4S</keyword>
<keyword id="KW-0408">Iron</keyword>
<keyword id="KW-0411">Iron-sulfur</keyword>
<keyword id="KW-0456">Lyase</keyword>
<keyword id="KW-0479">Metal-binding</keyword>
<keyword id="KW-1185">Reference proteome</keyword>
<keyword id="KW-0694">RNA-binding</keyword>
<keyword id="KW-0816">Tricarboxylic acid cycle</keyword>
<reference evidence="11" key="1">
    <citation type="journal article" date="1999" name="J. Bacteriol.">
        <title>Inactivation of the tricarboxylic acid cycle aconitase gene from Streptomyces viridochromogenes Tue494 impairs morphological and physiological differentiation.</title>
        <authorList>
            <person name="Schwartz D."/>
            <person name="Kaspar S."/>
            <person name="Kienzlen G."/>
            <person name="Muschko K."/>
            <person name="Wohlleben W."/>
        </authorList>
    </citation>
    <scope>NUCLEOTIDE SEQUENCE [GENOMIC DNA]</scope>
    <scope>FUNCTION</scope>
    <scope>DISRUPTION PHENOTYPE</scope>
    <source>
        <strain>DSM 40736 / JCM 4977 / BCRC 1201 / Tue 494</strain>
    </source>
</reference>
<reference evidence="12" key="2">
    <citation type="submission" date="2009-02" db="EMBL/GenBank/DDBJ databases">
        <title>Annotation of Streptomyces viridochromogenes strain DSM 40736.</title>
        <authorList>
            <consortium name="The Broad Institute Genome Sequencing Platform"/>
            <consortium name="Broad Institute Microbial Sequencing Center"/>
            <person name="Fischbach M."/>
            <person name="Godfrey P."/>
            <person name="Ward D."/>
            <person name="Young S."/>
            <person name="Zeng Q."/>
            <person name="Koehrsen M."/>
            <person name="Alvarado L."/>
            <person name="Berlin A.M."/>
            <person name="Bochicchio J."/>
            <person name="Borenstein D."/>
            <person name="Chapman S.B."/>
            <person name="Chen Z."/>
            <person name="Engels R."/>
            <person name="Freedman E."/>
            <person name="Gellesch M."/>
            <person name="Goldberg J."/>
            <person name="Griggs A."/>
            <person name="Gujja S."/>
            <person name="Heilman E.R."/>
            <person name="Heiman D.I."/>
            <person name="Hepburn T.A."/>
            <person name="Howarth C."/>
            <person name="Jen D."/>
            <person name="Larson L."/>
            <person name="Lewis B."/>
            <person name="Mehta T."/>
            <person name="Park D."/>
            <person name="Pearson M."/>
            <person name="Richards J."/>
            <person name="Roberts A."/>
            <person name="Saif S."/>
            <person name="Shea T.D."/>
            <person name="Shenoy N."/>
            <person name="Sisk P."/>
            <person name="Stolte C."/>
            <person name="Sykes S.N."/>
            <person name="Thomson T."/>
            <person name="Walk T."/>
            <person name="White J."/>
            <person name="Yandava C."/>
            <person name="Straight P."/>
            <person name="Clardy J."/>
            <person name="Hung D."/>
            <person name="Kolter R."/>
            <person name="Mekalanos J."/>
            <person name="Walker S."/>
            <person name="Walsh C.T."/>
            <person name="Wieland-Brown L.C."/>
            <person name="Haas B."/>
            <person name="Nusbaum C."/>
            <person name="Birren B."/>
        </authorList>
    </citation>
    <scope>NUCLEOTIDE SEQUENCE [LARGE SCALE GENOMIC DNA]</scope>
    <source>
        <strain>DSM 40736 / JCM 4977 / BCRC 1201 / Tue 494</strain>
    </source>
</reference>
<reference key="3">
    <citation type="journal article" date="2001" name="Appl. Environ. Microbiol.">
        <title>The phosphinomethylmalate isomerase gene pmi, encoding an aconitase-like enzyme, is involved in the synthesis of phosphinothricin tripeptide in Streptomyces viridochromogenes.</title>
        <authorList>
            <person name="Heinzelmann E."/>
            <person name="Kaspar S."/>
            <person name="Kienzlen G."/>
            <person name="Recktenwald J."/>
            <person name="Wohlleben W."/>
            <person name="Schwartz D."/>
        </authorList>
    </citation>
    <scope>DISRUPTION PHENOTYPE</scope>
    <source>
        <strain>DSM 40736 / JCM 4977 / BCRC 1201 / Tue 494</strain>
    </source>
</reference>
<reference key="4">
    <citation type="journal article" date="2002" name="Arch. Microbiol.">
        <title>Tricarboxylic acid cycle aconitase activity during the life cycle of Streptomyces viridochromogenesTue494.</title>
        <authorList>
            <person name="Muschko K."/>
            <person name="Kienzlen G."/>
            <person name="Fiedler H.P."/>
            <person name="Wohlleben W."/>
            <person name="Schwartz D."/>
        </authorList>
    </citation>
    <scope>TRANSCRIPTIONAL REGULATION</scope>
    <source>
        <strain>DSM 40736 / JCM 4977 / BCRC 1201 / Tue 494</strain>
    </source>
</reference>
<reference key="5">
    <citation type="journal article" date="2012" name="Environ. Microbiol.">
        <title>The bifunctional role of aconitase in Streptomyces viridochromogenes Tue494.</title>
        <authorList>
            <person name="Michta E."/>
            <person name="Schad K."/>
            <person name="Blin K."/>
            <person name="Ort-Winklbauer R."/>
            <person name="Roettig M."/>
            <person name="Kohlbacher O."/>
            <person name="Wohlleben W."/>
            <person name="Schinko E."/>
            <person name="Mast Y."/>
        </authorList>
    </citation>
    <scope>FUNCTION</scope>
    <scope>CATALYTIC ACTIVITY</scope>
    <scope>DISRUPTION PHENOTYPE</scope>
    <scope>MUTAGENESIS OF 125-SER--ASP-129; CYS-538; ARG-763 AND GLN-767</scope>
    <source>
        <strain>DSM 40736 / JCM 4977 / BCRC 1201 / Tue 494</strain>
    </source>
</reference>
<reference key="6">
    <citation type="journal article" date="2014" name="PLoS ONE">
        <title>Proteomic approach to reveal the regulatory function of aconitase AcnA in oxidative stress response in the antibiotic producer Streptomyces viridochromogenes Tue494.</title>
        <authorList>
            <person name="Michta E."/>
            <person name="Ding W."/>
            <person name="Zhu S."/>
            <person name="Blin K."/>
            <person name="Ruan H."/>
            <person name="Wang R."/>
            <person name="Wohlleben W."/>
            <person name="Mast Y."/>
        </authorList>
    </citation>
    <scope>FUNCTION</scope>
    <source>
        <strain>DSM 40736 / JCM 4977 / BCRC 1201 / Tue 494</strain>
    </source>
</reference>
<dbReference type="EC" id="4.2.1.3" evidence="6 10"/>
<dbReference type="EMBL" id="Y17270">
    <property type="protein sequence ID" value="CAB62405.1"/>
    <property type="molecule type" value="Genomic_DNA"/>
</dbReference>
<dbReference type="EMBL" id="GG657757">
    <property type="protein sequence ID" value="EFL35567.1"/>
    <property type="molecule type" value="Genomic_DNA"/>
</dbReference>
<dbReference type="RefSeq" id="WP_003993696.1">
    <property type="nucleotide sequence ID" value="NZ_GG657757.1"/>
</dbReference>
<dbReference type="SMR" id="D9X0I3"/>
<dbReference type="STRING" id="591159.SSQG_06085"/>
<dbReference type="eggNOG" id="COG1048">
    <property type="taxonomic scope" value="Bacteria"/>
</dbReference>
<dbReference type="HOGENOM" id="CLU_013476_2_1_11"/>
<dbReference type="OrthoDB" id="9764318at2"/>
<dbReference type="BRENDA" id="4.2.1.3">
    <property type="organism ID" value="6116"/>
</dbReference>
<dbReference type="UniPathway" id="UPA00223">
    <property type="reaction ID" value="UER00718"/>
</dbReference>
<dbReference type="Proteomes" id="UP000004184">
    <property type="component" value="Unassembled WGS sequence"/>
</dbReference>
<dbReference type="GO" id="GO:0047456">
    <property type="term" value="F:2-methylisocitrate dehydratase activity"/>
    <property type="evidence" value="ECO:0007669"/>
    <property type="project" value="UniProtKB-EC"/>
</dbReference>
<dbReference type="GO" id="GO:0051539">
    <property type="term" value="F:4 iron, 4 sulfur cluster binding"/>
    <property type="evidence" value="ECO:0007669"/>
    <property type="project" value="UniProtKB-KW"/>
</dbReference>
<dbReference type="GO" id="GO:0003994">
    <property type="term" value="F:aconitate hydratase activity"/>
    <property type="evidence" value="ECO:0007669"/>
    <property type="project" value="UniProtKB-EC"/>
</dbReference>
<dbReference type="GO" id="GO:0046872">
    <property type="term" value="F:metal ion binding"/>
    <property type="evidence" value="ECO:0007669"/>
    <property type="project" value="UniProtKB-KW"/>
</dbReference>
<dbReference type="GO" id="GO:0003723">
    <property type="term" value="F:RNA binding"/>
    <property type="evidence" value="ECO:0007669"/>
    <property type="project" value="UniProtKB-KW"/>
</dbReference>
<dbReference type="GO" id="GO:0006099">
    <property type="term" value="P:tricarboxylic acid cycle"/>
    <property type="evidence" value="ECO:0007669"/>
    <property type="project" value="UniProtKB-UniPathway"/>
</dbReference>
<dbReference type="CDD" id="cd01580">
    <property type="entry name" value="AcnA_IRP_Swivel"/>
    <property type="match status" value="1"/>
</dbReference>
<dbReference type="FunFam" id="3.20.19.10:FF:000001">
    <property type="entry name" value="Aconitate hydratase"/>
    <property type="match status" value="1"/>
</dbReference>
<dbReference type="FunFam" id="3.30.499.10:FF:000002">
    <property type="entry name" value="Aconitate hydratase"/>
    <property type="match status" value="1"/>
</dbReference>
<dbReference type="FunFam" id="3.30.499.10:FF:000009">
    <property type="entry name" value="Aconitate hydratase"/>
    <property type="match status" value="1"/>
</dbReference>
<dbReference type="Gene3D" id="6.10.190.10">
    <property type="match status" value="1"/>
</dbReference>
<dbReference type="Gene3D" id="3.30.499.10">
    <property type="entry name" value="Aconitase, domain 3"/>
    <property type="match status" value="2"/>
</dbReference>
<dbReference type="Gene3D" id="3.20.19.10">
    <property type="entry name" value="Aconitase, domain 4"/>
    <property type="match status" value="1"/>
</dbReference>
<dbReference type="InterPro" id="IPR044137">
    <property type="entry name" value="AcnA_IRP_Swivel"/>
</dbReference>
<dbReference type="InterPro" id="IPR015931">
    <property type="entry name" value="Acnase/IPM_dHydase_lsu_aba_1/3"/>
</dbReference>
<dbReference type="InterPro" id="IPR001030">
    <property type="entry name" value="Acoase/IPM_deHydtase_lsu_aba"/>
</dbReference>
<dbReference type="InterPro" id="IPR015928">
    <property type="entry name" value="Aconitase/3IPM_dehydase_swvl"/>
</dbReference>
<dbReference type="InterPro" id="IPR006249">
    <property type="entry name" value="Aconitase/IRP2"/>
</dbReference>
<dbReference type="InterPro" id="IPR018136">
    <property type="entry name" value="Aconitase_4Fe-4S_BS"/>
</dbReference>
<dbReference type="InterPro" id="IPR036008">
    <property type="entry name" value="Aconitase_4Fe-4S_dom"/>
</dbReference>
<dbReference type="InterPro" id="IPR000573">
    <property type="entry name" value="AconitaseA/IPMdHydase_ssu_swvl"/>
</dbReference>
<dbReference type="NCBIfam" id="NF006757">
    <property type="entry name" value="PRK09277.1"/>
    <property type="match status" value="1"/>
</dbReference>
<dbReference type="NCBIfam" id="NF009520">
    <property type="entry name" value="PRK12881.1"/>
    <property type="match status" value="1"/>
</dbReference>
<dbReference type="PANTHER" id="PTHR11670">
    <property type="entry name" value="ACONITASE/IRON-RESPONSIVE ELEMENT FAMILY MEMBER"/>
    <property type="match status" value="1"/>
</dbReference>
<dbReference type="Pfam" id="PF00330">
    <property type="entry name" value="Aconitase"/>
    <property type="match status" value="1"/>
</dbReference>
<dbReference type="Pfam" id="PF00694">
    <property type="entry name" value="Aconitase_C"/>
    <property type="match status" value="1"/>
</dbReference>
<dbReference type="PRINTS" id="PR00415">
    <property type="entry name" value="ACONITASE"/>
</dbReference>
<dbReference type="SUPFAM" id="SSF53732">
    <property type="entry name" value="Aconitase iron-sulfur domain"/>
    <property type="match status" value="1"/>
</dbReference>
<dbReference type="SUPFAM" id="SSF52016">
    <property type="entry name" value="LeuD/IlvD-like"/>
    <property type="match status" value="1"/>
</dbReference>
<dbReference type="PROSITE" id="PS00450">
    <property type="entry name" value="ACONITASE_1"/>
    <property type="match status" value="1"/>
</dbReference>
<dbReference type="PROSITE" id="PS01244">
    <property type="entry name" value="ACONITASE_2"/>
    <property type="match status" value="1"/>
</dbReference>
<feature type="chain" id="PRO_0000460200" description="Aconitate hydratase A">
    <location>
        <begin position="1"/>
        <end position="931"/>
    </location>
</feature>
<feature type="region of interest" description="Disordered" evidence="2">
    <location>
        <begin position="402"/>
        <end position="454"/>
    </location>
</feature>
<feature type="binding site" evidence="1">
    <location>
        <position position="472"/>
    </location>
    <ligand>
        <name>[4Fe-4S] cluster</name>
        <dbReference type="ChEBI" id="CHEBI:49883"/>
    </ligand>
</feature>
<feature type="binding site" evidence="1">
    <location>
        <position position="538"/>
    </location>
    <ligand>
        <name>[4Fe-4S] cluster</name>
        <dbReference type="ChEBI" id="CHEBI:49883"/>
    </ligand>
</feature>
<feature type="binding site" evidence="1">
    <location>
        <position position="541"/>
    </location>
    <ligand>
        <name>[4Fe-4S] cluster</name>
        <dbReference type="ChEBI" id="CHEBI:49883"/>
    </ligand>
</feature>
<feature type="mutagenesis site" description="Retains 40% of aconitase activity. Improves RNA-binding ability." evidence="6">
    <location>
        <begin position="125"/>
        <end position="129"/>
    </location>
</feature>
<feature type="mutagenesis site" description="Loss of aconitase activity. Cannot rescue the growth defect of a disruption mutant and results in only a slight increase in PTT production in the mutant. Shows weak IRE-binding activity." evidence="6">
    <original>C</original>
    <variation>A</variation>
    <location>
        <position position="538"/>
    </location>
</feature>
<feature type="mutagenesis site" description="Loss of aconitase activity and IRE-binding activity; when associated with E-767." evidence="6">
    <original>R</original>
    <variation>E</variation>
    <location>
        <position position="763"/>
    </location>
</feature>
<feature type="mutagenesis site" description="Loss of aconitase activity and IRE-binding activity; when associated with E-763." evidence="6">
    <original>Q</original>
    <variation>E</variation>
    <location>
        <position position="767"/>
    </location>
</feature>
<feature type="sequence conflict" description="In Ref. 1; CAB62405." evidence="9" ref="1">
    <original>P</original>
    <variation>R</variation>
    <location>
        <position position="432"/>
    </location>
</feature>
<organism>
    <name type="scientific">Streptomyces viridochromogenes (strain DSM 40736 / JCM 4977 / BCRC 1201 / Tue 494)</name>
    <dbReference type="NCBI Taxonomy" id="591159"/>
    <lineage>
        <taxon>Bacteria</taxon>
        <taxon>Bacillati</taxon>
        <taxon>Actinomycetota</taxon>
        <taxon>Actinomycetes</taxon>
        <taxon>Kitasatosporales</taxon>
        <taxon>Streptomycetaceae</taxon>
        <taxon>Streptomyces</taxon>
    </lineage>
</organism>
<name>ACNA_STRVT</name>